<name>AROK_CHLPB</name>
<gene>
    <name evidence="1" type="primary">aroK</name>
    <name type="ordered locus">Cphamn1_0960</name>
</gene>
<reference key="1">
    <citation type="submission" date="2008-06" db="EMBL/GenBank/DDBJ databases">
        <title>Complete sequence of Chlorobium phaeobacteroides BS1.</title>
        <authorList>
            <consortium name="US DOE Joint Genome Institute"/>
            <person name="Lucas S."/>
            <person name="Copeland A."/>
            <person name="Lapidus A."/>
            <person name="Glavina del Rio T."/>
            <person name="Dalin E."/>
            <person name="Tice H."/>
            <person name="Bruce D."/>
            <person name="Goodwin L."/>
            <person name="Pitluck S."/>
            <person name="Schmutz J."/>
            <person name="Larimer F."/>
            <person name="Land M."/>
            <person name="Hauser L."/>
            <person name="Kyrpides N."/>
            <person name="Ovchinnikova G."/>
            <person name="Li T."/>
            <person name="Liu Z."/>
            <person name="Zhao F."/>
            <person name="Overmann J."/>
            <person name="Bryant D.A."/>
            <person name="Richardson P."/>
        </authorList>
    </citation>
    <scope>NUCLEOTIDE SEQUENCE [LARGE SCALE GENOMIC DNA]</scope>
    <source>
        <strain>BS1</strain>
    </source>
</reference>
<evidence type="ECO:0000255" key="1">
    <source>
        <dbReference type="HAMAP-Rule" id="MF_00109"/>
    </source>
</evidence>
<evidence type="ECO:0000256" key="2">
    <source>
        <dbReference type="SAM" id="MobiDB-lite"/>
    </source>
</evidence>
<sequence length="199" mass="22643">MKHPSLIFLTGFSGSGKSTIGPLLANSLGYDFLDLDKEIERQADKPITRIFAEEGEDHFRERERAMLESIVGRKELVVSLGGGALQNNDCFSLIISSGTMVYLHSSPLILAKRMSHKTDRPLMKGENGERLSSEEIEKKILALLEHREPRYKTAQIMVETDTKRIGTTVEELTRKIERYVRRAEKNQNSHSQTKKQSRK</sequence>
<protein>
    <recommendedName>
        <fullName evidence="1">Shikimate kinase</fullName>
        <shortName evidence="1">SK</shortName>
        <ecNumber evidence="1">2.7.1.71</ecNumber>
    </recommendedName>
</protein>
<accession>B3EPX3</accession>
<keyword id="KW-0028">Amino-acid biosynthesis</keyword>
<keyword id="KW-0057">Aromatic amino acid biosynthesis</keyword>
<keyword id="KW-0067">ATP-binding</keyword>
<keyword id="KW-0963">Cytoplasm</keyword>
<keyword id="KW-0418">Kinase</keyword>
<keyword id="KW-0460">Magnesium</keyword>
<keyword id="KW-0479">Metal-binding</keyword>
<keyword id="KW-0547">Nucleotide-binding</keyword>
<keyword id="KW-0808">Transferase</keyword>
<organism>
    <name type="scientific">Chlorobium phaeobacteroides (strain BS1)</name>
    <dbReference type="NCBI Taxonomy" id="331678"/>
    <lineage>
        <taxon>Bacteria</taxon>
        <taxon>Pseudomonadati</taxon>
        <taxon>Chlorobiota</taxon>
        <taxon>Chlorobiia</taxon>
        <taxon>Chlorobiales</taxon>
        <taxon>Chlorobiaceae</taxon>
        <taxon>Chlorobium/Pelodictyon group</taxon>
        <taxon>Chlorobium</taxon>
    </lineage>
</organism>
<feature type="chain" id="PRO_1000094378" description="Shikimate kinase">
    <location>
        <begin position="1"/>
        <end position="199"/>
    </location>
</feature>
<feature type="region of interest" description="Disordered" evidence="2">
    <location>
        <begin position="179"/>
        <end position="199"/>
    </location>
</feature>
<feature type="binding site" evidence="1">
    <location>
        <begin position="14"/>
        <end position="19"/>
    </location>
    <ligand>
        <name>ATP</name>
        <dbReference type="ChEBI" id="CHEBI:30616"/>
    </ligand>
</feature>
<feature type="binding site" evidence="1">
    <location>
        <position position="18"/>
    </location>
    <ligand>
        <name>Mg(2+)</name>
        <dbReference type="ChEBI" id="CHEBI:18420"/>
    </ligand>
</feature>
<feature type="binding site" evidence="1">
    <location>
        <position position="36"/>
    </location>
    <ligand>
        <name>substrate</name>
    </ligand>
</feature>
<feature type="binding site" evidence="1">
    <location>
        <position position="60"/>
    </location>
    <ligand>
        <name>substrate</name>
    </ligand>
</feature>
<feature type="binding site" evidence="1">
    <location>
        <position position="82"/>
    </location>
    <ligand>
        <name>substrate</name>
    </ligand>
</feature>
<feature type="binding site" evidence="1">
    <location>
        <position position="120"/>
    </location>
    <ligand>
        <name>ATP</name>
        <dbReference type="ChEBI" id="CHEBI:30616"/>
    </ligand>
</feature>
<feature type="binding site" evidence="1">
    <location>
        <position position="147"/>
    </location>
    <ligand>
        <name>substrate</name>
    </ligand>
</feature>
<proteinExistence type="inferred from homology"/>
<comment type="function">
    <text evidence="1">Catalyzes the specific phosphorylation of the 3-hydroxyl group of shikimic acid using ATP as a cosubstrate.</text>
</comment>
<comment type="catalytic activity">
    <reaction evidence="1">
        <text>shikimate + ATP = 3-phosphoshikimate + ADP + H(+)</text>
        <dbReference type="Rhea" id="RHEA:13121"/>
        <dbReference type="ChEBI" id="CHEBI:15378"/>
        <dbReference type="ChEBI" id="CHEBI:30616"/>
        <dbReference type="ChEBI" id="CHEBI:36208"/>
        <dbReference type="ChEBI" id="CHEBI:145989"/>
        <dbReference type="ChEBI" id="CHEBI:456216"/>
        <dbReference type="EC" id="2.7.1.71"/>
    </reaction>
</comment>
<comment type="cofactor">
    <cofactor evidence="1">
        <name>Mg(2+)</name>
        <dbReference type="ChEBI" id="CHEBI:18420"/>
    </cofactor>
    <text evidence="1">Binds 1 Mg(2+) ion per subunit.</text>
</comment>
<comment type="pathway">
    <text evidence="1">Metabolic intermediate biosynthesis; chorismate biosynthesis; chorismate from D-erythrose 4-phosphate and phosphoenolpyruvate: step 5/7.</text>
</comment>
<comment type="subunit">
    <text evidence="1">Monomer.</text>
</comment>
<comment type="subcellular location">
    <subcellularLocation>
        <location evidence="1">Cytoplasm</location>
    </subcellularLocation>
</comment>
<comment type="similarity">
    <text evidence="1">Belongs to the shikimate kinase family.</text>
</comment>
<dbReference type="EC" id="2.7.1.71" evidence="1"/>
<dbReference type="EMBL" id="CP001101">
    <property type="protein sequence ID" value="ACE03905.1"/>
    <property type="molecule type" value="Genomic_DNA"/>
</dbReference>
<dbReference type="SMR" id="B3EPX3"/>
<dbReference type="STRING" id="331678.Cphamn1_0960"/>
<dbReference type="KEGG" id="cpb:Cphamn1_0960"/>
<dbReference type="eggNOG" id="COG0703">
    <property type="taxonomic scope" value="Bacteria"/>
</dbReference>
<dbReference type="HOGENOM" id="CLU_057607_2_1_10"/>
<dbReference type="OrthoDB" id="9800332at2"/>
<dbReference type="UniPathway" id="UPA00053">
    <property type="reaction ID" value="UER00088"/>
</dbReference>
<dbReference type="GO" id="GO:0005829">
    <property type="term" value="C:cytosol"/>
    <property type="evidence" value="ECO:0007669"/>
    <property type="project" value="TreeGrafter"/>
</dbReference>
<dbReference type="GO" id="GO:0005524">
    <property type="term" value="F:ATP binding"/>
    <property type="evidence" value="ECO:0007669"/>
    <property type="project" value="UniProtKB-UniRule"/>
</dbReference>
<dbReference type="GO" id="GO:0000287">
    <property type="term" value="F:magnesium ion binding"/>
    <property type="evidence" value="ECO:0007669"/>
    <property type="project" value="UniProtKB-UniRule"/>
</dbReference>
<dbReference type="GO" id="GO:0004765">
    <property type="term" value="F:shikimate kinase activity"/>
    <property type="evidence" value="ECO:0007669"/>
    <property type="project" value="UniProtKB-UniRule"/>
</dbReference>
<dbReference type="GO" id="GO:0008652">
    <property type="term" value="P:amino acid biosynthetic process"/>
    <property type="evidence" value="ECO:0007669"/>
    <property type="project" value="UniProtKB-KW"/>
</dbReference>
<dbReference type="GO" id="GO:0009073">
    <property type="term" value="P:aromatic amino acid family biosynthetic process"/>
    <property type="evidence" value="ECO:0007669"/>
    <property type="project" value="UniProtKB-KW"/>
</dbReference>
<dbReference type="GO" id="GO:0009423">
    <property type="term" value="P:chorismate biosynthetic process"/>
    <property type="evidence" value="ECO:0007669"/>
    <property type="project" value="UniProtKB-UniRule"/>
</dbReference>
<dbReference type="CDD" id="cd00464">
    <property type="entry name" value="SK"/>
    <property type="match status" value="1"/>
</dbReference>
<dbReference type="Gene3D" id="3.40.50.300">
    <property type="entry name" value="P-loop containing nucleotide triphosphate hydrolases"/>
    <property type="match status" value="1"/>
</dbReference>
<dbReference type="HAMAP" id="MF_00109">
    <property type="entry name" value="Shikimate_kinase"/>
    <property type="match status" value="1"/>
</dbReference>
<dbReference type="InterPro" id="IPR027417">
    <property type="entry name" value="P-loop_NTPase"/>
</dbReference>
<dbReference type="InterPro" id="IPR031322">
    <property type="entry name" value="Shikimate/glucono_kinase"/>
</dbReference>
<dbReference type="InterPro" id="IPR000623">
    <property type="entry name" value="Shikimate_kinase/TSH1"/>
</dbReference>
<dbReference type="InterPro" id="IPR023000">
    <property type="entry name" value="Shikimate_kinase_CS"/>
</dbReference>
<dbReference type="PANTHER" id="PTHR21087">
    <property type="entry name" value="SHIKIMATE KINASE"/>
    <property type="match status" value="1"/>
</dbReference>
<dbReference type="PANTHER" id="PTHR21087:SF16">
    <property type="entry name" value="SHIKIMATE KINASE 1, CHLOROPLASTIC"/>
    <property type="match status" value="1"/>
</dbReference>
<dbReference type="Pfam" id="PF01202">
    <property type="entry name" value="SKI"/>
    <property type="match status" value="1"/>
</dbReference>
<dbReference type="PRINTS" id="PR01100">
    <property type="entry name" value="SHIKIMTKNASE"/>
</dbReference>
<dbReference type="SUPFAM" id="SSF52540">
    <property type="entry name" value="P-loop containing nucleoside triphosphate hydrolases"/>
    <property type="match status" value="1"/>
</dbReference>
<dbReference type="PROSITE" id="PS01128">
    <property type="entry name" value="SHIKIMATE_KINASE"/>
    <property type="match status" value="1"/>
</dbReference>